<sequence>MKIKVGILGASGYAGNELVRILLNHPKVEISYLGSSSSVGQNYQDLYPNTPLNLCFENKNLDELELDLLFLATPHEFSAKLLNENLLKKMKIIDLSADFRLKNPKDYELWYKFTHPNQELLQNAVYGLCELYKEEIKKASLVANPGCYTTCSILSLYPLFKEKIIDFNSVIIDAKSGVSGAGRSAKVENLFCEVNENIKAYGLASHRHTPEIEEHLSYAAKEKITLQFTPHLVPMQRGILISAYANLKEDLQEQDIRDIYTKYYQNNKFIRLLPPQSLPQTRWVKSSNFADINFSVDQRTKRVIVLGAIDNLIKGAAGQAVQNMNLMFDFDEDEGLKFFANL</sequence>
<evidence type="ECO:0000255" key="1">
    <source>
        <dbReference type="HAMAP-Rule" id="MF_00150"/>
    </source>
</evidence>
<proteinExistence type="inferred from homology"/>
<gene>
    <name evidence="1" type="primary">argC</name>
    <name type="ordered locus">C8J_0202</name>
</gene>
<name>ARGC_CAMJ8</name>
<feature type="chain" id="PRO_1000071514" description="N-acetyl-gamma-glutamyl-phosphate reductase">
    <location>
        <begin position="1"/>
        <end position="342"/>
    </location>
</feature>
<feature type="active site" evidence="1">
    <location>
        <position position="147"/>
    </location>
</feature>
<dbReference type="EC" id="1.2.1.38" evidence="1"/>
<dbReference type="EMBL" id="CP000814">
    <property type="protein sequence ID" value="ABV51801.1"/>
    <property type="molecule type" value="Genomic_DNA"/>
</dbReference>
<dbReference type="RefSeq" id="WP_002866368.1">
    <property type="nucleotide sequence ID" value="NC_009839.1"/>
</dbReference>
<dbReference type="SMR" id="A8FK14"/>
<dbReference type="KEGG" id="cju:C8J_0202"/>
<dbReference type="HOGENOM" id="CLU_006384_0_1_7"/>
<dbReference type="UniPathway" id="UPA00068">
    <property type="reaction ID" value="UER00108"/>
</dbReference>
<dbReference type="GO" id="GO:0005737">
    <property type="term" value="C:cytoplasm"/>
    <property type="evidence" value="ECO:0007669"/>
    <property type="project" value="UniProtKB-SubCell"/>
</dbReference>
<dbReference type="GO" id="GO:0003942">
    <property type="term" value="F:N-acetyl-gamma-glutamyl-phosphate reductase activity"/>
    <property type="evidence" value="ECO:0007669"/>
    <property type="project" value="UniProtKB-UniRule"/>
</dbReference>
<dbReference type="GO" id="GO:0051287">
    <property type="term" value="F:NAD binding"/>
    <property type="evidence" value="ECO:0007669"/>
    <property type="project" value="InterPro"/>
</dbReference>
<dbReference type="GO" id="GO:0070401">
    <property type="term" value="F:NADP+ binding"/>
    <property type="evidence" value="ECO:0007669"/>
    <property type="project" value="InterPro"/>
</dbReference>
<dbReference type="GO" id="GO:0006526">
    <property type="term" value="P:L-arginine biosynthetic process"/>
    <property type="evidence" value="ECO:0007669"/>
    <property type="project" value="UniProtKB-UniRule"/>
</dbReference>
<dbReference type="CDD" id="cd23934">
    <property type="entry name" value="AGPR_1_C"/>
    <property type="match status" value="1"/>
</dbReference>
<dbReference type="CDD" id="cd17895">
    <property type="entry name" value="AGPR_1_N"/>
    <property type="match status" value="1"/>
</dbReference>
<dbReference type="FunFam" id="3.30.360.10:FF:000014">
    <property type="entry name" value="N-acetyl-gamma-glutamyl-phosphate reductase"/>
    <property type="match status" value="1"/>
</dbReference>
<dbReference type="Gene3D" id="3.30.360.10">
    <property type="entry name" value="Dihydrodipicolinate Reductase, domain 2"/>
    <property type="match status" value="1"/>
</dbReference>
<dbReference type="Gene3D" id="3.40.50.720">
    <property type="entry name" value="NAD(P)-binding Rossmann-like Domain"/>
    <property type="match status" value="1"/>
</dbReference>
<dbReference type="HAMAP" id="MF_00150">
    <property type="entry name" value="ArgC_type1"/>
    <property type="match status" value="1"/>
</dbReference>
<dbReference type="InterPro" id="IPR023013">
    <property type="entry name" value="AGPR_AS"/>
</dbReference>
<dbReference type="InterPro" id="IPR000706">
    <property type="entry name" value="AGPR_type-1"/>
</dbReference>
<dbReference type="InterPro" id="IPR036291">
    <property type="entry name" value="NAD(P)-bd_dom_sf"/>
</dbReference>
<dbReference type="InterPro" id="IPR050085">
    <property type="entry name" value="NAGSA_dehydrogenase"/>
</dbReference>
<dbReference type="InterPro" id="IPR000534">
    <property type="entry name" value="Semialdehyde_DH_NAD-bd"/>
</dbReference>
<dbReference type="NCBIfam" id="TIGR01850">
    <property type="entry name" value="argC"/>
    <property type="match status" value="1"/>
</dbReference>
<dbReference type="PANTHER" id="PTHR32338:SF10">
    <property type="entry name" value="N-ACETYL-GAMMA-GLUTAMYL-PHOSPHATE REDUCTASE, CHLOROPLASTIC-RELATED"/>
    <property type="match status" value="1"/>
</dbReference>
<dbReference type="PANTHER" id="PTHR32338">
    <property type="entry name" value="N-ACETYL-GAMMA-GLUTAMYL-PHOSPHATE REDUCTASE, CHLOROPLASTIC-RELATED-RELATED"/>
    <property type="match status" value="1"/>
</dbReference>
<dbReference type="Pfam" id="PF01118">
    <property type="entry name" value="Semialdhyde_dh"/>
    <property type="match status" value="1"/>
</dbReference>
<dbReference type="Pfam" id="PF22698">
    <property type="entry name" value="Semialdhyde_dhC_1"/>
    <property type="match status" value="1"/>
</dbReference>
<dbReference type="SMART" id="SM00859">
    <property type="entry name" value="Semialdhyde_dh"/>
    <property type="match status" value="1"/>
</dbReference>
<dbReference type="SUPFAM" id="SSF55347">
    <property type="entry name" value="Glyceraldehyde-3-phosphate dehydrogenase-like, C-terminal domain"/>
    <property type="match status" value="1"/>
</dbReference>
<dbReference type="SUPFAM" id="SSF51735">
    <property type="entry name" value="NAD(P)-binding Rossmann-fold domains"/>
    <property type="match status" value="1"/>
</dbReference>
<dbReference type="PROSITE" id="PS01224">
    <property type="entry name" value="ARGC"/>
    <property type="match status" value="1"/>
</dbReference>
<accession>A8FK14</accession>
<organism>
    <name type="scientific">Campylobacter jejuni subsp. jejuni serotype O:6 (strain 81116 / NCTC 11828)</name>
    <dbReference type="NCBI Taxonomy" id="407148"/>
    <lineage>
        <taxon>Bacteria</taxon>
        <taxon>Pseudomonadati</taxon>
        <taxon>Campylobacterota</taxon>
        <taxon>Epsilonproteobacteria</taxon>
        <taxon>Campylobacterales</taxon>
        <taxon>Campylobacteraceae</taxon>
        <taxon>Campylobacter</taxon>
    </lineage>
</organism>
<reference key="1">
    <citation type="journal article" date="2007" name="J. Bacteriol.">
        <title>The complete genome sequence of Campylobacter jejuni strain 81116 (NCTC11828).</title>
        <authorList>
            <person name="Pearson B.M."/>
            <person name="Gaskin D.J.H."/>
            <person name="Segers R.P.A.M."/>
            <person name="Wells J.M."/>
            <person name="Nuijten P.J.M."/>
            <person name="van Vliet A.H.M."/>
        </authorList>
    </citation>
    <scope>NUCLEOTIDE SEQUENCE [LARGE SCALE GENOMIC DNA]</scope>
    <source>
        <strain>81116 / NCTC 11828</strain>
    </source>
</reference>
<keyword id="KW-0028">Amino-acid biosynthesis</keyword>
<keyword id="KW-0055">Arginine biosynthesis</keyword>
<keyword id="KW-0963">Cytoplasm</keyword>
<keyword id="KW-0521">NADP</keyword>
<keyword id="KW-0560">Oxidoreductase</keyword>
<protein>
    <recommendedName>
        <fullName evidence="1">N-acetyl-gamma-glutamyl-phosphate reductase</fullName>
        <shortName evidence="1">AGPR</shortName>
        <ecNumber evidence="1">1.2.1.38</ecNumber>
    </recommendedName>
    <alternativeName>
        <fullName evidence="1">N-acetyl-glutamate semialdehyde dehydrogenase</fullName>
        <shortName evidence="1">NAGSA dehydrogenase</shortName>
    </alternativeName>
</protein>
<comment type="function">
    <text evidence="1">Catalyzes the NADPH-dependent reduction of N-acetyl-5-glutamyl phosphate to yield N-acetyl-L-glutamate 5-semialdehyde.</text>
</comment>
<comment type="catalytic activity">
    <reaction evidence="1">
        <text>N-acetyl-L-glutamate 5-semialdehyde + phosphate + NADP(+) = N-acetyl-L-glutamyl 5-phosphate + NADPH + H(+)</text>
        <dbReference type="Rhea" id="RHEA:21588"/>
        <dbReference type="ChEBI" id="CHEBI:15378"/>
        <dbReference type="ChEBI" id="CHEBI:29123"/>
        <dbReference type="ChEBI" id="CHEBI:43474"/>
        <dbReference type="ChEBI" id="CHEBI:57783"/>
        <dbReference type="ChEBI" id="CHEBI:57936"/>
        <dbReference type="ChEBI" id="CHEBI:58349"/>
        <dbReference type="EC" id="1.2.1.38"/>
    </reaction>
</comment>
<comment type="pathway">
    <text evidence="1">Amino-acid biosynthesis; L-arginine biosynthesis; N(2)-acetyl-L-ornithine from L-glutamate: step 3/4.</text>
</comment>
<comment type="subcellular location">
    <subcellularLocation>
        <location evidence="1">Cytoplasm</location>
    </subcellularLocation>
</comment>
<comment type="similarity">
    <text evidence="1">Belongs to the NAGSA dehydrogenase family. Type 1 subfamily.</text>
</comment>